<sequence length="296" mass="34148">MHVPVLLEELILALEINPKGFYVDLTLGRGGHSLAILEKISNGKLVVFDKDQDALDQTRPKLLAYKQNIEIIWSDFSRFDFYLENLGIQFVDGFIIDLGVSSPQIDDPERGFSYSKDGNLDMRMDKSQKLSAFIVLNEYPYEKLVEIFFKYGQIPYAREIARAIINSRPLKTTFELVNLVKKVIPALVLVKKNFIKNVFQAVRIEVNNELDSLQKLLEKLPKFLKQGSKVAIITFHSLEDRIVKKAFLDLIRKDKLEFFQKGLPKFSMKVFRPKANELKSNPRAKSAKLRLLLKNR</sequence>
<dbReference type="EC" id="2.1.1.199" evidence="1"/>
<dbReference type="EMBL" id="AE017243">
    <property type="protein sequence ID" value="AAZ44491.1"/>
    <property type="molecule type" value="Genomic_DNA"/>
</dbReference>
<dbReference type="RefSeq" id="WP_011284163.1">
    <property type="nucleotide sequence ID" value="NC_007295.1"/>
</dbReference>
<dbReference type="SMR" id="Q4A9T0"/>
<dbReference type="GeneID" id="41334706"/>
<dbReference type="KEGG" id="mhj:MHJ_0405"/>
<dbReference type="eggNOG" id="COG0275">
    <property type="taxonomic scope" value="Bacteria"/>
</dbReference>
<dbReference type="HOGENOM" id="CLU_038422_2_0_14"/>
<dbReference type="OrthoDB" id="9806637at2"/>
<dbReference type="Proteomes" id="UP000000548">
    <property type="component" value="Chromosome"/>
</dbReference>
<dbReference type="GO" id="GO:0005737">
    <property type="term" value="C:cytoplasm"/>
    <property type="evidence" value="ECO:0007669"/>
    <property type="project" value="UniProtKB-SubCell"/>
</dbReference>
<dbReference type="GO" id="GO:0071424">
    <property type="term" value="F:rRNA (cytosine-N4-)-methyltransferase activity"/>
    <property type="evidence" value="ECO:0007669"/>
    <property type="project" value="UniProtKB-UniRule"/>
</dbReference>
<dbReference type="GO" id="GO:0070475">
    <property type="term" value="P:rRNA base methylation"/>
    <property type="evidence" value="ECO:0007669"/>
    <property type="project" value="UniProtKB-UniRule"/>
</dbReference>
<dbReference type="Gene3D" id="1.10.150.170">
    <property type="entry name" value="Putative methyltransferase TM0872, insert domain"/>
    <property type="match status" value="1"/>
</dbReference>
<dbReference type="Gene3D" id="3.40.50.150">
    <property type="entry name" value="Vaccinia Virus protein VP39"/>
    <property type="match status" value="1"/>
</dbReference>
<dbReference type="HAMAP" id="MF_01007">
    <property type="entry name" value="16SrRNA_methyltr_H"/>
    <property type="match status" value="1"/>
</dbReference>
<dbReference type="InterPro" id="IPR002903">
    <property type="entry name" value="RsmH"/>
</dbReference>
<dbReference type="InterPro" id="IPR023397">
    <property type="entry name" value="SAM-dep_MeTrfase_MraW_recog"/>
</dbReference>
<dbReference type="InterPro" id="IPR029063">
    <property type="entry name" value="SAM-dependent_MTases_sf"/>
</dbReference>
<dbReference type="NCBIfam" id="TIGR00006">
    <property type="entry name" value="16S rRNA (cytosine(1402)-N(4))-methyltransferase RsmH"/>
    <property type="match status" value="1"/>
</dbReference>
<dbReference type="PANTHER" id="PTHR11265:SF0">
    <property type="entry name" value="12S RRNA N4-METHYLCYTIDINE METHYLTRANSFERASE"/>
    <property type="match status" value="1"/>
</dbReference>
<dbReference type="PANTHER" id="PTHR11265">
    <property type="entry name" value="S-ADENOSYL-METHYLTRANSFERASE MRAW"/>
    <property type="match status" value="1"/>
</dbReference>
<dbReference type="Pfam" id="PF01795">
    <property type="entry name" value="Methyltransf_5"/>
    <property type="match status" value="1"/>
</dbReference>
<dbReference type="PIRSF" id="PIRSF004486">
    <property type="entry name" value="MraW"/>
    <property type="match status" value="1"/>
</dbReference>
<dbReference type="SUPFAM" id="SSF81799">
    <property type="entry name" value="Putative methyltransferase TM0872, insert domain"/>
    <property type="match status" value="1"/>
</dbReference>
<dbReference type="SUPFAM" id="SSF53335">
    <property type="entry name" value="S-adenosyl-L-methionine-dependent methyltransferases"/>
    <property type="match status" value="1"/>
</dbReference>
<accession>Q4A9T0</accession>
<comment type="function">
    <text evidence="1">Specifically methylates the N4 position of cytidine in position 1402 (C1402) of 16S rRNA.</text>
</comment>
<comment type="catalytic activity">
    <reaction evidence="1">
        <text>cytidine(1402) in 16S rRNA + S-adenosyl-L-methionine = N(4)-methylcytidine(1402) in 16S rRNA + S-adenosyl-L-homocysteine + H(+)</text>
        <dbReference type="Rhea" id="RHEA:42928"/>
        <dbReference type="Rhea" id="RHEA-COMP:10286"/>
        <dbReference type="Rhea" id="RHEA-COMP:10287"/>
        <dbReference type="ChEBI" id="CHEBI:15378"/>
        <dbReference type="ChEBI" id="CHEBI:57856"/>
        <dbReference type="ChEBI" id="CHEBI:59789"/>
        <dbReference type="ChEBI" id="CHEBI:74506"/>
        <dbReference type="ChEBI" id="CHEBI:82748"/>
        <dbReference type="EC" id="2.1.1.199"/>
    </reaction>
</comment>
<comment type="subcellular location">
    <subcellularLocation>
        <location evidence="1">Cytoplasm</location>
    </subcellularLocation>
</comment>
<comment type="similarity">
    <text evidence="1">Belongs to the methyltransferase superfamily. RsmH family.</text>
</comment>
<feature type="chain" id="PRO_0000223547" description="Ribosomal RNA small subunit methyltransferase H">
    <location>
        <begin position="1"/>
        <end position="296"/>
    </location>
</feature>
<feature type="binding site" evidence="1">
    <location>
        <begin position="30"/>
        <end position="32"/>
    </location>
    <ligand>
        <name>S-adenosyl-L-methionine</name>
        <dbReference type="ChEBI" id="CHEBI:59789"/>
    </ligand>
</feature>
<feature type="binding site" evidence="1">
    <location>
        <position position="49"/>
    </location>
    <ligand>
        <name>S-adenosyl-L-methionine</name>
        <dbReference type="ChEBI" id="CHEBI:59789"/>
    </ligand>
</feature>
<feature type="binding site" evidence="1">
    <location>
        <position position="76"/>
    </location>
    <ligand>
        <name>S-adenosyl-L-methionine</name>
        <dbReference type="ChEBI" id="CHEBI:59789"/>
    </ligand>
</feature>
<feature type="binding site" evidence="1">
    <location>
        <position position="97"/>
    </location>
    <ligand>
        <name>S-adenosyl-L-methionine</name>
        <dbReference type="ChEBI" id="CHEBI:59789"/>
    </ligand>
</feature>
<feature type="binding site" evidence="1">
    <location>
        <position position="104"/>
    </location>
    <ligand>
        <name>S-adenosyl-L-methionine</name>
        <dbReference type="ChEBI" id="CHEBI:59789"/>
    </ligand>
</feature>
<gene>
    <name evidence="1" type="primary">rsmH</name>
    <name type="synonym">mraW</name>
    <name type="ordered locus">MHJ_0405</name>
</gene>
<reference key="1">
    <citation type="journal article" date="2005" name="J. Bacteriol.">
        <title>Swine and poultry pathogens: the complete genome sequences of two strains of Mycoplasma hyopneumoniae and a strain of Mycoplasma synoviae.</title>
        <authorList>
            <person name="Vasconcelos A.T.R."/>
            <person name="Ferreira H.B."/>
            <person name="Bizarro C.V."/>
            <person name="Bonatto S.L."/>
            <person name="Carvalho M.O."/>
            <person name="Pinto P.M."/>
            <person name="Almeida D.F."/>
            <person name="Almeida L.G.P."/>
            <person name="Almeida R."/>
            <person name="Alves-Junior L."/>
            <person name="Assuncao E.N."/>
            <person name="Azevedo V.A.C."/>
            <person name="Bogo M.R."/>
            <person name="Brigido M.M."/>
            <person name="Brocchi M."/>
            <person name="Burity H.A."/>
            <person name="Camargo A.A."/>
            <person name="Camargo S.S."/>
            <person name="Carepo M.S."/>
            <person name="Carraro D.M."/>
            <person name="de Mattos Cascardo J.C."/>
            <person name="Castro L.A."/>
            <person name="Cavalcanti G."/>
            <person name="Chemale G."/>
            <person name="Collevatti R.G."/>
            <person name="Cunha C.W."/>
            <person name="Dallagiovanna B."/>
            <person name="Dambros B.P."/>
            <person name="Dellagostin O.A."/>
            <person name="Falcao C."/>
            <person name="Fantinatti-Garboggini F."/>
            <person name="Felipe M.S.S."/>
            <person name="Fiorentin L."/>
            <person name="Franco G.R."/>
            <person name="Freitas N.S.A."/>
            <person name="Frias D."/>
            <person name="Grangeiro T.B."/>
            <person name="Grisard E.C."/>
            <person name="Guimaraes C.T."/>
            <person name="Hungria M."/>
            <person name="Jardim S.N."/>
            <person name="Krieger M.A."/>
            <person name="Laurino J.P."/>
            <person name="Lima L.F.A."/>
            <person name="Lopes M.I."/>
            <person name="Loreto E.L.S."/>
            <person name="Madeira H.M.F."/>
            <person name="Manfio G.P."/>
            <person name="Maranhao A.Q."/>
            <person name="Martinkovics C.T."/>
            <person name="Medeiros S.R.B."/>
            <person name="Moreira M.A.M."/>
            <person name="Neiva M."/>
            <person name="Ramalho-Neto C.E."/>
            <person name="Nicolas M.F."/>
            <person name="Oliveira S.C."/>
            <person name="Paixao R.F.C."/>
            <person name="Pedrosa F.O."/>
            <person name="Pena S.D.J."/>
            <person name="Pereira M."/>
            <person name="Pereira-Ferrari L."/>
            <person name="Piffer I."/>
            <person name="Pinto L.S."/>
            <person name="Potrich D.P."/>
            <person name="Salim A.C.M."/>
            <person name="Santos F.R."/>
            <person name="Schmitt R."/>
            <person name="Schneider M.P.C."/>
            <person name="Schrank A."/>
            <person name="Schrank I.S."/>
            <person name="Schuck A.F."/>
            <person name="Seuanez H.N."/>
            <person name="Silva D.W."/>
            <person name="Silva R."/>
            <person name="Silva S.C."/>
            <person name="Soares C.M.A."/>
            <person name="Souza K.R.L."/>
            <person name="Souza R.C."/>
            <person name="Staats C.C."/>
            <person name="Steffens M.B.R."/>
            <person name="Teixeira S.M.R."/>
            <person name="Urmenyi T.P."/>
            <person name="Vainstein M.H."/>
            <person name="Zuccherato L.W."/>
            <person name="Simpson A.J.G."/>
            <person name="Zaha A."/>
        </authorList>
    </citation>
    <scope>NUCLEOTIDE SEQUENCE [LARGE SCALE GENOMIC DNA]</scope>
    <source>
        <strain>J / ATCC 25934 / NCTC 10110</strain>
    </source>
</reference>
<keyword id="KW-0963">Cytoplasm</keyword>
<keyword id="KW-0489">Methyltransferase</keyword>
<keyword id="KW-0698">rRNA processing</keyword>
<keyword id="KW-0949">S-adenosyl-L-methionine</keyword>
<keyword id="KW-0808">Transferase</keyword>
<name>RSMH_MESHJ</name>
<protein>
    <recommendedName>
        <fullName evidence="1">Ribosomal RNA small subunit methyltransferase H</fullName>
        <ecNumber evidence="1">2.1.1.199</ecNumber>
    </recommendedName>
    <alternativeName>
        <fullName evidence="1">16S rRNA m(4)C1402 methyltransferase</fullName>
    </alternativeName>
    <alternativeName>
        <fullName evidence="1">rRNA (cytosine-N(4)-)-methyltransferase RsmH</fullName>
    </alternativeName>
</protein>
<evidence type="ECO:0000255" key="1">
    <source>
        <dbReference type="HAMAP-Rule" id="MF_01007"/>
    </source>
</evidence>
<proteinExistence type="inferred from homology"/>
<organism>
    <name type="scientific">Mesomycoplasma hyopneumoniae (strain J / ATCC 25934 / NCTC 10110)</name>
    <name type="common">Mycoplasma hyopneumoniae</name>
    <dbReference type="NCBI Taxonomy" id="262719"/>
    <lineage>
        <taxon>Bacteria</taxon>
        <taxon>Bacillati</taxon>
        <taxon>Mycoplasmatota</taxon>
        <taxon>Mycoplasmoidales</taxon>
        <taxon>Metamycoplasmataceae</taxon>
        <taxon>Mesomycoplasma</taxon>
    </lineage>
</organism>